<feature type="chain" id="PRO_1000129396" description="D-alanyl carrier protein">
    <location>
        <begin position="1"/>
        <end position="79"/>
    </location>
</feature>
<feature type="domain" description="Carrier" evidence="1">
    <location>
        <begin position="2"/>
        <end position="79"/>
    </location>
</feature>
<feature type="modified residue" description="O-(pantetheine 4'-phosphoryl)serine" evidence="1">
    <location>
        <position position="37"/>
    </location>
</feature>
<protein>
    <recommendedName>
        <fullName evidence="1">D-alanyl carrier protein</fullName>
        <shortName evidence="1">DCP</shortName>
    </recommendedName>
    <alternativeName>
        <fullName evidence="1">D-alanine--poly(phosphoribitol) ligase subunit 2</fullName>
    </alternativeName>
</protein>
<organism>
    <name type="scientific">Bacillus cereus (strain B4264)</name>
    <dbReference type="NCBI Taxonomy" id="405532"/>
    <lineage>
        <taxon>Bacteria</taxon>
        <taxon>Bacillati</taxon>
        <taxon>Bacillota</taxon>
        <taxon>Bacilli</taxon>
        <taxon>Bacillales</taxon>
        <taxon>Bacillaceae</taxon>
        <taxon>Bacillus</taxon>
        <taxon>Bacillus cereus group</taxon>
    </lineage>
</organism>
<name>DLTC_BACC4</name>
<dbReference type="EMBL" id="CP001176">
    <property type="protein sequence ID" value="ACK63885.1"/>
    <property type="molecule type" value="Genomic_DNA"/>
</dbReference>
<dbReference type="RefSeq" id="WP_000807310.1">
    <property type="nucleotide sequence ID" value="NZ_VEHB01000003.1"/>
</dbReference>
<dbReference type="SMR" id="B7HHC4"/>
<dbReference type="GeneID" id="93009671"/>
<dbReference type="KEGG" id="bcb:BCB4264_A1422"/>
<dbReference type="HOGENOM" id="CLU_108696_19_0_9"/>
<dbReference type="UniPathway" id="UPA00556"/>
<dbReference type="Proteomes" id="UP000007096">
    <property type="component" value="Chromosome"/>
</dbReference>
<dbReference type="GO" id="GO:0005737">
    <property type="term" value="C:cytoplasm"/>
    <property type="evidence" value="ECO:0007669"/>
    <property type="project" value="UniProtKB-SubCell"/>
</dbReference>
<dbReference type="GO" id="GO:0036370">
    <property type="term" value="F:D-alanyl carrier activity"/>
    <property type="evidence" value="ECO:0007669"/>
    <property type="project" value="UniProtKB-UniRule"/>
</dbReference>
<dbReference type="GO" id="GO:0071555">
    <property type="term" value="P:cell wall organization"/>
    <property type="evidence" value="ECO:0007669"/>
    <property type="project" value="UniProtKB-KW"/>
</dbReference>
<dbReference type="GO" id="GO:0070395">
    <property type="term" value="P:lipoteichoic acid biosynthetic process"/>
    <property type="evidence" value="ECO:0007669"/>
    <property type="project" value="UniProtKB-UniRule"/>
</dbReference>
<dbReference type="FunFam" id="1.10.1200.10:FF:000004">
    <property type="entry name" value="D-alanyl carrier protein"/>
    <property type="match status" value="1"/>
</dbReference>
<dbReference type="Gene3D" id="1.10.1200.10">
    <property type="entry name" value="ACP-like"/>
    <property type="match status" value="1"/>
</dbReference>
<dbReference type="HAMAP" id="MF_00565">
    <property type="entry name" value="DltC"/>
    <property type="match status" value="1"/>
</dbReference>
<dbReference type="InterPro" id="IPR036736">
    <property type="entry name" value="ACP-like_sf"/>
</dbReference>
<dbReference type="InterPro" id="IPR003230">
    <property type="entry name" value="DltC"/>
</dbReference>
<dbReference type="InterPro" id="IPR009081">
    <property type="entry name" value="PP-bd_ACP"/>
</dbReference>
<dbReference type="NCBIfam" id="TIGR01688">
    <property type="entry name" value="dltC"/>
    <property type="match status" value="1"/>
</dbReference>
<dbReference type="NCBIfam" id="NF003464">
    <property type="entry name" value="PRK05087.1"/>
    <property type="match status" value="1"/>
</dbReference>
<dbReference type="Pfam" id="PF00550">
    <property type="entry name" value="PP-binding"/>
    <property type="match status" value="1"/>
</dbReference>
<dbReference type="SUPFAM" id="SSF47336">
    <property type="entry name" value="ACP-like"/>
    <property type="match status" value="1"/>
</dbReference>
<dbReference type="PROSITE" id="PS50075">
    <property type="entry name" value="CARRIER"/>
    <property type="match status" value="1"/>
</dbReference>
<evidence type="ECO:0000255" key="1">
    <source>
        <dbReference type="HAMAP-Rule" id="MF_00565"/>
    </source>
</evidence>
<sequence>MAEFKEQVLDILEEVCENDIVKENLDVQLFEEGILDSFAVVSLLVEFQERLDIEVSISDFDRDEWATPNMVIKKLEEIR</sequence>
<keyword id="KW-0961">Cell wall biogenesis/degradation</keyword>
<keyword id="KW-0963">Cytoplasm</keyword>
<keyword id="KW-0596">Phosphopantetheine</keyword>
<keyword id="KW-0597">Phosphoprotein</keyword>
<accession>B7HHC4</accession>
<comment type="function">
    <text evidence="1">Carrier protein involved in the D-alanylation of lipoteichoic acid (LTA). The loading of thioester-linked D-alanine onto DltC is catalyzed by D-alanine--D-alanyl carrier protein ligase DltA. The DltC-carried D-alanyl group is further transferred to cell membrane phosphatidylglycerol (PG) by forming an ester bond, probably catalyzed by DltD. D-alanylation of LTA plays an important role in modulating the properties of the cell wall in Gram-positive bacteria, influencing the net charge of the cell wall.</text>
</comment>
<comment type="pathway">
    <text evidence="1">Cell wall biogenesis; lipoteichoic acid biosynthesis.</text>
</comment>
<comment type="subcellular location">
    <subcellularLocation>
        <location evidence="1">Cytoplasm</location>
    </subcellularLocation>
</comment>
<comment type="PTM">
    <text evidence="1">4'-phosphopantetheine is transferred from CoA to a specific serine of apo-DCP.</text>
</comment>
<comment type="similarity">
    <text evidence="1">Belongs to the DltC family.</text>
</comment>
<proteinExistence type="inferred from homology"/>
<reference key="1">
    <citation type="submission" date="2008-10" db="EMBL/GenBank/DDBJ databases">
        <title>Genome sequence of Bacillus cereus B4264.</title>
        <authorList>
            <person name="Dodson R.J."/>
            <person name="Durkin A.S."/>
            <person name="Rosovitz M.J."/>
            <person name="Rasko D.A."/>
            <person name="Hoffmaster A."/>
            <person name="Ravel J."/>
            <person name="Sutton G."/>
        </authorList>
    </citation>
    <scope>NUCLEOTIDE SEQUENCE [LARGE SCALE GENOMIC DNA]</scope>
    <source>
        <strain>B4264</strain>
    </source>
</reference>
<gene>
    <name evidence="1" type="primary">dltC</name>
    <name type="ordered locus">BCB4264_A1422</name>
</gene>